<sequence>MIYSMTAFARLEVKKDWGDAVWEIRSVNQRYLENFFRLPEQFRGLENTLREKLRQNLTRGKIECSLRIETKKQANAELNLNKELANQVIQSLQWIKAQAGEGEINLTDVLRYPGVVEAQEQDLDAISQDLLTAFDDLLTDFIAMRGREGEKLNDIIQQRLDSIAVETDKVRSQMPAVLQWQRERLLQRFEDAQLNLDPQRVEQEMILLAQRIDVAEELDRLQMHVKETTNILKKGGAVGRKLDFMMQELNRESNTLASKSINADITASAVELKVLIEQMREQIQNLE</sequence>
<gene>
    <name type="ordered locus">HI_0467</name>
</gene>
<evidence type="ECO:0000250" key="1">
    <source>
        <dbReference type="UniProtKB" id="O34441"/>
    </source>
</evidence>
<evidence type="ECO:0000250" key="2">
    <source>
        <dbReference type="UniProtKB" id="P23839"/>
    </source>
</evidence>
<evidence type="ECO:0000305" key="3"/>
<reference key="1">
    <citation type="journal article" date="1995" name="Science">
        <title>Whole-genome random sequencing and assembly of Haemophilus influenzae Rd.</title>
        <authorList>
            <person name="Fleischmann R.D."/>
            <person name="Adams M.D."/>
            <person name="White O."/>
            <person name="Clayton R.A."/>
            <person name="Kirkness E.F."/>
            <person name="Kerlavage A.R."/>
            <person name="Bult C.J."/>
            <person name="Tomb J.-F."/>
            <person name="Dougherty B.A."/>
            <person name="Merrick J.M."/>
            <person name="McKenney K."/>
            <person name="Sutton G.G."/>
            <person name="FitzHugh W."/>
            <person name="Fields C.A."/>
            <person name="Gocayne J.D."/>
            <person name="Scott J.D."/>
            <person name="Shirley R."/>
            <person name="Liu L.-I."/>
            <person name="Glodek A."/>
            <person name="Kelley J.M."/>
            <person name="Weidman J.F."/>
            <person name="Phillips C.A."/>
            <person name="Spriggs T."/>
            <person name="Hedblom E."/>
            <person name="Cotton M.D."/>
            <person name="Utterback T.R."/>
            <person name="Hanna M.C."/>
            <person name="Nguyen D.T."/>
            <person name="Saudek D.M."/>
            <person name="Brandon R.C."/>
            <person name="Fine L.D."/>
            <person name="Fritchman J.L."/>
            <person name="Fuhrmann J.L."/>
            <person name="Geoghagen N.S.M."/>
            <person name="Gnehm C.L."/>
            <person name="McDonald L.A."/>
            <person name="Small K.V."/>
            <person name="Fraser C.M."/>
            <person name="Smith H.O."/>
            <person name="Venter J.C."/>
        </authorList>
    </citation>
    <scope>NUCLEOTIDE SEQUENCE [LARGE SCALE GENOMIC DNA]</scope>
    <source>
        <strain>ATCC 51907 / DSM 11121 / KW20 / Rd</strain>
    </source>
</reference>
<reference key="2">
    <citation type="journal article" date="2000" name="Electrophoresis">
        <title>Two-dimensional map of the proteome of Haemophilus influenzae.</title>
        <authorList>
            <person name="Langen H."/>
            <person name="Takacs B."/>
            <person name="Evers S."/>
            <person name="Berndt P."/>
            <person name="Lahm H.W."/>
            <person name="Wipf B."/>
            <person name="Gray C."/>
            <person name="Fountoulakis M."/>
        </authorList>
    </citation>
    <scope>IDENTIFICATION BY MASS SPECTROMETRY</scope>
    <source>
        <strain>ATCC 51907 / DSM 11121 / KW20 / Rd</strain>
    </source>
</reference>
<comment type="function">
    <text evidence="1">Probably a ssRNA endonuclease.</text>
</comment>
<comment type="function">
    <text evidence="2">Might contribute to small RNA (sRNA) regulation.</text>
</comment>
<comment type="cofactor">
    <cofactor evidence="1">
        <name>a divalent metal cation</name>
        <dbReference type="ChEBI" id="CHEBI:60240"/>
    </cofactor>
</comment>
<comment type="similarity">
    <text evidence="3">Belongs to the YicC/YloC family.</text>
</comment>
<dbReference type="EC" id="3.1.26.-" evidence="1"/>
<dbReference type="EMBL" id="L42023">
    <property type="protein sequence ID" value="AAC22126.1"/>
    <property type="molecule type" value="Genomic_DNA"/>
</dbReference>
<dbReference type="PIR" id="C64153">
    <property type="entry name" value="C64153"/>
</dbReference>
<dbReference type="RefSeq" id="NP_438628.3">
    <property type="nucleotide sequence ID" value="NC_000907.1"/>
</dbReference>
<dbReference type="SMR" id="P44726"/>
<dbReference type="STRING" id="71421.HI_0467"/>
<dbReference type="EnsemblBacteria" id="AAC22126">
    <property type="protein sequence ID" value="AAC22126"/>
    <property type="gene ID" value="HI_0467"/>
</dbReference>
<dbReference type="KEGG" id="hin:HI_0467"/>
<dbReference type="PATRIC" id="fig|71421.8.peg.487"/>
<dbReference type="eggNOG" id="COG1561">
    <property type="taxonomic scope" value="Bacteria"/>
</dbReference>
<dbReference type="HOGENOM" id="CLU_076609_0_0_6"/>
<dbReference type="OrthoDB" id="9771229at2"/>
<dbReference type="PhylomeDB" id="P44726"/>
<dbReference type="BioCyc" id="HINF71421:G1GJ1-483-MONOMER"/>
<dbReference type="Proteomes" id="UP000000579">
    <property type="component" value="Chromosome"/>
</dbReference>
<dbReference type="GO" id="GO:0016891">
    <property type="term" value="F:RNA endonuclease activity, producing 5'-phosphomonoesters"/>
    <property type="evidence" value="ECO:0000318"/>
    <property type="project" value="GO_Central"/>
</dbReference>
<dbReference type="GO" id="GO:0006401">
    <property type="term" value="P:RNA catabolic process"/>
    <property type="evidence" value="ECO:0000318"/>
    <property type="project" value="GO_Central"/>
</dbReference>
<dbReference type="InterPro" id="IPR013551">
    <property type="entry name" value="YicC-like_C"/>
</dbReference>
<dbReference type="InterPro" id="IPR013527">
    <property type="entry name" value="YicC-like_N"/>
</dbReference>
<dbReference type="InterPro" id="IPR005229">
    <property type="entry name" value="YicC/YloC-like"/>
</dbReference>
<dbReference type="NCBIfam" id="TIGR00255">
    <property type="entry name" value="YicC/YloC family endoribonuclease"/>
    <property type="match status" value="1"/>
</dbReference>
<dbReference type="PANTHER" id="PTHR30636">
    <property type="entry name" value="UPF0701 PROTEIN YICC"/>
    <property type="match status" value="1"/>
</dbReference>
<dbReference type="PANTHER" id="PTHR30636:SF3">
    <property type="entry name" value="UPF0701 PROTEIN YICC"/>
    <property type="match status" value="1"/>
</dbReference>
<dbReference type="Pfam" id="PF08340">
    <property type="entry name" value="YicC-like_C"/>
    <property type="match status" value="1"/>
</dbReference>
<dbReference type="Pfam" id="PF03755">
    <property type="entry name" value="YicC-like_N"/>
    <property type="match status" value="1"/>
</dbReference>
<feature type="chain" id="PRO_0000169614" description="Probable endoribonuclease YicC">
    <location>
        <begin position="1"/>
        <end position="287"/>
    </location>
</feature>
<name>YICC_HAEIN</name>
<organism>
    <name type="scientific">Haemophilus influenzae (strain ATCC 51907 / DSM 11121 / KW20 / Rd)</name>
    <dbReference type="NCBI Taxonomy" id="71421"/>
    <lineage>
        <taxon>Bacteria</taxon>
        <taxon>Pseudomonadati</taxon>
        <taxon>Pseudomonadota</taxon>
        <taxon>Gammaproteobacteria</taxon>
        <taxon>Pasteurellales</taxon>
        <taxon>Pasteurellaceae</taxon>
        <taxon>Haemophilus</taxon>
    </lineage>
</organism>
<keyword id="KW-0255">Endonuclease</keyword>
<keyword id="KW-0378">Hydrolase</keyword>
<keyword id="KW-0540">Nuclease</keyword>
<keyword id="KW-1185">Reference proteome</keyword>
<accession>P44726</accession>
<proteinExistence type="evidence at protein level"/>
<protein>
    <recommendedName>
        <fullName evidence="2">Probable endoribonuclease YicC</fullName>
        <ecNumber evidence="1">3.1.26.-</ecNumber>
    </recommendedName>
</protein>